<organism>
    <name type="scientific">Coxiella burnetii (strain CbuG_Q212)</name>
    <name type="common">Coxiella burnetii (strain Q212)</name>
    <dbReference type="NCBI Taxonomy" id="434923"/>
    <lineage>
        <taxon>Bacteria</taxon>
        <taxon>Pseudomonadati</taxon>
        <taxon>Pseudomonadota</taxon>
        <taxon>Gammaproteobacteria</taxon>
        <taxon>Legionellales</taxon>
        <taxon>Coxiellaceae</taxon>
        <taxon>Coxiella</taxon>
    </lineage>
</organism>
<proteinExistence type="inferred from homology"/>
<sequence length="451" mass="51096">MSLPTSLWDKCLGYLRDEIPPQQYNTWIRPLHAIESKQNGLLLLAPNRFVLDWINERFLNRITELLDELSDTPPQIRLQIGSRSTEMPTKNSHEPSHRKAAAPPAGTTISHTQANINSNFTFDSFVEGKSNQLARAAATQVAENPGQAYNPLFIYGGVGLGKTHLMHAVGNAILRKDSSKKVLYLHSERFVADMIKALQHNAMNEFKRFYRSLNALLIDDIQFFAGKDRSQEEFFHTFNALLDGQQQIILTCDRYPKEINGLEERLQSRFGWGLTVAIEPPELETRVAILMSKAEQLKVHLPHEVAFFIAKHIQSNVRELEGALKRVIANAHFTGQSITVDFTREALKDLLTLQARLITIENIQKTVAEYYKIKVADLLAKRRNRSVARPRQMAMALAKELTNHSLPEIGDAFGGRDHTTVLHACRKVKELLATSLDILEDYKNLMRILSG</sequence>
<feature type="chain" id="PRO_1000121967" description="Chromosomal replication initiator protein DnaA">
    <location>
        <begin position="1"/>
        <end position="451"/>
    </location>
</feature>
<feature type="region of interest" description="Domain I, interacts with DnaA modulators" evidence="1">
    <location>
        <begin position="1"/>
        <end position="72"/>
    </location>
</feature>
<feature type="region of interest" description="Domain II" evidence="1">
    <location>
        <begin position="72"/>
        <end position="114"/>
    </location>
</feature>
<feature type="region of interest" description="Disordered" evidence="2">
    <location>
        <begin position="81"/>
        <end position="106"/>
    </location>
</feature>
<feature type="region of interest" description="Domain III, AAA+ region" evidence="1">
    <location>
        <begin position="115"/>
        <end position="331"/>
    </location>
</feature>
<feature type="region of interest" description="Domain IV, binds dsDNA" evidence="1">
    <location>
        <begin position="332"/>
        <end position="451"/>
    </location>
</feature>
<feature type="compositionally biased region" description="Polar residues" evidence="2">
    <location>
        <begin position="81"/>
        <end position="90"/>
    </location>
</feature>
<feature type="binding site" evidence="1">
    <location>
        <position position="159"/>
    </location>
    <ligand>
        <name>ATP</name>
        <dbReference type="ChEBI" id="CHEBI:30616"/>
    </ligand>
</feature>
<feature type="binding site" evidence="1">
    <location>
        <position position="161"/>
    </location>
    <ligand>
        <name>ATP</name>
        <dbReference type="ChEBI" id="CHEBI:30616"/>
    </ligand>
</feature>
<feature type="binding site" evidence="1">
    <location>
        <position position="162"/>
    </location>
    <ligand>
        <name>ATP</name>
        <dbReference type="ChEBI" id="CHEBI:30616"/>
    </ligand>
</feature>
<feature type="binding site" evidence="1">
    <location>
        <position position="163"/>
    </location>
    <ligand>
        <name>ATP</name>
        <dbReference type="ChEBI" id="CHEBI:30616"/>
    </ligand>
</feature>
<comment type="function">
    <text evidence="1">Plays an essential role in the initiation and regulation of chromosomal replication. ATP-DnaA binds to the origin of replication (oriC) to initiate formation of the DNA replication initiation complex once per cell cycle. Binds the DnaA box (a 9 base pair repeat at the origin) and separates the double-stranded (ds)DNA. Forms a right-handed helical filament on oriC DNA; dsDNA binds to the exterior of the filament while single-stranded (ss)DNA is stabiized in the filament's interior. The ATP-DnaA-oriC complex binds and stabilizes one strand of the AT-rich DNA unwinding element (DUE), permitting loading of DNA polymerase. After initiation quickly degrades to an ADP-DnaA complex that is not apt for DNA replication. Binds acidic phospholipids.</text>
</comment>
<comment type="subunit">
    <text evidence="1">Oligomerizes as a right-handed, spiral filament on DNA at oriC.</text>
</comment>
<comment type="subcellular location">
    <subcellularLocation>
        <location evidence="1">Cytoplasm</location>
    </subcellularLocation>
</comment>
<comment type="domain">
    <text evidence="1">Domain I is involved in oligomerization and binding regulators, domain II is flexibile and of varying length in different bacteria, domain III forms the AAA+ region, while domain IV binds dsDNA.</text>
</comment>
<comment type="similarity">
    <text evidence="1">Belongs to the DnaA family.</text>
</comment>
<dbReference type="EMBL" id="CP001019">
    <property type="protein sequence ID" value="ACJ17461.1"/>
    <property type="molecule type" value="Genomic_DNA"/>
</dbReference>
<dbReference type="RefSeq" id="WP_005769932.1">
    <property type="nucleotide sequence ID" value="NC_011527.1"/>
</dbReference>
<dbReference type="SMR" id="B6J287"/>
<dbReference type="KEGG" id="cbg:CbuG_0002"/>
<dbReference type="HOGENOM" id="CLU_026910_0_1_6"/>
<dbReference type="GO" id="GO:0005737">
    <property type="term" value="C:cytoplasm"/>
    <property type="evidence" value="ECO:0007669"/>
    <property type="project" value="UniProtKB-SubCell"/>
</dbReference>
<dbReference type="GO" id="GO:0005886">
    <property type="term" value="C:plasma membrane"/>
    <property type="evidence" value="ECO:0007669"/>
    <property type="project" value="TreeGrafter"/>
</dbReference>
<dbReference type="GO" id="GO:0005524">
    <property type="term" value="F:ATP binding"/>
    <property type="evidence" value="ECO:0007669"/>
    <property type="project" value="UniProtKB-UniRule"/>
</dbReference>
<dbReference type="GO" id="GO:0016887">
    <property type="term" value="F:ATP hydrolysis activity"/>
    <property type="evidence" value="ECO:0007669"/>
    <property type="project" value="InterPro"/>
</dbReference>
<dbReference type="GO" id="GO:0003688">
    <property type="term" value="F:DNA replication origin binding"/>
    <property type="evidence" value="ECO:0007669"/>
    <property type="project" value="UniProtKB-UniRule"/>
</dbReference>
<dbReference type="GO" id="GO:0008289">
    <property type="term" value="F:lipid binding"/>
    <property type="evidence" value="ECO:0007669"/>
    <property type="project" value="UniProtKB-KW"/>
</dbReference>
<dbReference type="GO" id="GO:0006270">
    <property type="term" value="P:DNA replication initiation"/>
    <property type="evidence" value="ECO:0007669"/>
    <property type="project" value="UniProtKB-UniRule"/>
</dbReference>
<dbReference type="GO" id="GO:0006275">
    <property type="term" value="P:regulation of DNA replication"/>
    <property type="evidence" value="ECO:0007669"/>
    <property type="project" value="UniProtKB-UniRule"/>
</dbReference>
<dbReference type="CDD" id="cd00009">
    <property type="entry name" value="AAA"/>
    <property type="match status" value="1"/>
</dbReference>
<dbReference type="CDD" id="cd06571">
    <property type="entry name" value="Bac_DnaA_C"/>
    <property type="match status" value="1"/>
</dbReference>
<dbReference type="FunFam" id="1.10.1750.10:FF:000001">
    <property type="entry name" value="Chromosomal replication initiator protein DnaA"/>
    <property type="match status" value="1"/>
</dbReference>
<dbReference type="FunFam" id="1.10.8.60:FF:000003">
    <property type="entry name" value="Chromosomal replication initiator protein DnaA"/>
    <property type="match status" value="1"/>
</dbReference>
<dbReference type="FunFam" id="3.40.50.300:FF:000103">
    <property type="entry name" value="Chromosomal replication initiator protein DnaA"/>
    <property type="match status" value="1"/>
</dbReference>
<dbReference type="Gene3D" id="1.10.1750.10">
    <property type="match status" value="1"/>
</dbReference>
<dbReference type="Gene3D" id="1.10.8.60">
    <property type="match status" value="1"/>
</dbReference>
<dbReference type="Gene3D" id="3.30.300.180">
    <property type="match status" value="1"/>
</dbReference>
<dbReference type="Gene3D" id="3.40.50.300">
    <property type="entry name" value="P-loop containing nucleotide triphosphate hydrolases"/>
    <property type="match status" value="1"/>
</dbReference>
<dbReference type="HAMAP" id="MF_00377">
    <property type="entry name" value="DnaA_bact"/>
    <property type="match status" value="1"/>
</dbReference>
<dbReference type="InterPro" id="IPR003593">
    <property type="entry name" value="AAA+_ATPase"/>
</dbReference>
<dbReference type="InterPro" id="IPR001957">
    <property type="entry name" value="Chromosome_initiator_DnaA"/>
</dbReference>
<dbReference type="InterPro" id="IPR020591">
    <property type="entry name" value="Chromosome_initiator_DnaA-like"/>
</dbReference>
<dbReference type="InterPro" id="IPR018312">
    <property type="entry name" value="Chromosome_initiator_DnaA_CS"/>
</dbReference>
<dbReference type="InterPro" id="IPR013159">
    <property type="entry name" value="DnaA_C"/>
</dbReference>
<dbReference type="InterPro" id="IPR013317">
    <property type="entry name" value="DnaA_dom"/>
</dbReference>
<dbReference type="InterPro" id="IPR024633">
    <property type="entry name" value="DnaA_N_dom"/>
</dbReference>
<dbReference type="InterPro" id="IPR038454">
    <property type="entry name" value="DnaA_N_sf"/>
</dbReference>
<dbReference type="InterPro" id="IPR027417">
    <property type="entry name" value="P-loop_NTPase"/>
</dbReference>
<dbReference type="InterPro" id="IPR010921">
    <property type="entry name" value="Trp_repressor/repl_initiator"/>
</dbReference>
<dbReference type="NCBIfam" id="TIGR00362">
    <property type="entry name" value="DnaA"/>
    <property type="match status" value="1"/>
</dbReference>
<dbReference type="PANTHER" id="PTHR30050">
    <property type="entry name" value="CHROMOSOMAL REPLICATION INITIATOR PROTEIN DNAA"/>
    <property type="match status" value="1"/>
</dbReference>
<dbReference type="PANTHER" id="PTHR30050:SF2">
    <property type="entry name" value="CHROMOSOMAL REPLICATION INITIATOR PROTEIN DNAA"/>
    <property type="match status" value="1"/>
</dbReference>
<dbReference type="Pfam" id="PF00308">
    <property type="entry name" value="Bac_DnaA"/>
    <property type="match status" value="1"/>
</dbReference>
<dbReference type="Pfam" id="PF08299">
    <property type="entry name" value="Bac_DnaA_C"/>
    <property type="match status" value="1"/>
</dbReference>
<dbReference type="Pfam" id="PF11638">
    <property type="entry name" value="DnaA_N"/>
    <property type="match status" value="1"/>
</dbReference>
<dbReference type="PRINTS" id="PR00051">
    <property type="entry name" value="DNAA"/>
</dbReference>
<dbReference type="SMART" id="SM00382">
    <property type="entry name" value="AAA"/>
    <property type="match status" value="1"/>
</dbReference>
<dbReference type="SMART" id="SM00760">
    <property type="entry name" value="Bac_DnaA_C"/>
    <property type="match status" value="1"/>
</dbReference>
<dbReference type="SUPFAM" id="SSF52540">
    <property type="entry name" value="P-loop containing nucleoside triphosphate hydrolases"/>
    <property type="match status" value="1"/>
</dbReference>
<dbReference type="SUPFAM" id="SSF48295">
    <property type="entry name" value="TrpR-like"/>
    <property type="match status" value="1"/>
</dbReference>
<dbReference type="PROSITE" id="PS01008">
    <property type="entry name" value="DNAA"/>
    <property type="match status" value="1"/>
</dbReference>
<gene>
    <name evidence="1" type="primary">dnaA</name>
    <name type="ordered locus">CbuG_0002</name>
</gene>
<protein>
    <recommendedName>
        <fullName evidence="1">Chromosomal replication initiator protein DnaA</fullName>
    </recommendedName>
</protein>
<evidence type="ECO:0000255" key="1">
    <source>
        <dbReference type="HAMAP-Rule" id="MF_00377"/>
    </source>
</evidence>
<evidence type="ECO:0000256" key="2">
    <source>
        <dbReference type="SAM" id="MobiDB-lite"/>
    </source>
</evidence>
<accession>B6J287</accession>
<keyword id="KW-0067">ATP-binding</keyword>
<keyword id="KW-0963">Cytoplasm</keyword>
<keyword id="KW-0235">DNA replication</keyword>
<keyword id="KW-0238">DNA-binding</keyword>
<keyword id="KW-0446">Lipid-binding</keyword>
<keyword id="KW-0547">Nucleotide-binding</keyword>
<name>DNAA_COXB2</name>
<reference key="1">
    <citation type="journal article" date="2009" name="Infect. Immun.">
        <title>Comparative genomics reveal extensive transposon-mediated genomic plasticity and diversity among potential effector proteins within the genus Coxiella.</title>
        <authorList>
            <person name="Beare P.A."/>
            <person name="Unsworth N."/>
            <person name="Andoh M."/>
            <person name="Voth D.E."/>
            <person name="Omsland A."/>
            <person name="Gilk S.D."/>
            <person name="Williams K.P."/>
            <person name="Sobral B.W."/>
            <person name="Kupko J.J. III"/>
            <person name="Porcella S.F."/>
            <person name="Samuel J.E."/>
            <person name="Heinzen R.A."/>
        </authorList>
    </citation>
    <scope>NUCLEOTIDE SEQUENCE [LARGE SCALE GENOMIC DNA]</scope>
    <source>
        <strain>CbuG_Q212</strain>
    </source>
</reference>